<feature type="chain" id="PRO_0000065478" description="Suppressor of activated egl-4 protein 2" evidence="5">
    <location>
        <begin position="1"/>
        <end position="305"/>
    </location>
</feature>
<feature type="DNA-binding region" description="A.T hook" evidence="2">
    <location>
        <begin position="158"/>
        <end position="170"/>
    </location>
</feature>
<feature type="region of interest" description="Disordered" evidence="3">
    <location>
        <begin position="138"/>
        <end position="168"/>
    </location>
</feature>
<protein>
    <recommendedName>
        <fullName evidence="6">Suppressor of activated egl-4 protein 2</fullName>
    </recommendedName>
</protein>
<organism>
    <name type="scientific">Caenorhabditis elegans</name>
    <dbReference type="NCBI Taxonomy" id="6239"/>
    <lineage>
        <taxon>Eukaryota</taxon>
        <taxon>Metazoa</taxon>
        <taxon>Ecdysozoa</taxon>
        <taxon>Nematoda</taxon>
        <taxon>Chromadorea</taxon>
        <taxon>Rhabditida</taxon>
        <taxon>Rhabditina</taxon>
        <taxon>Rhabditomorpha</taxon>
        <taxon>Rhabditoidea</taxon>
        <taxon>Rhabditidae</taxon>
        <taxon>Peloderinae</taxon>
        <taxon>Caenorhabditis</taxon>
    </lineage>
</organism>
<name>SAEG2_CAEEL</name>
<gene>
    <name evidence="6" type="primary">saeg-2</name>
    <name evidence="6" type="ORF">T23G5.6</name>
</gene>
<evidence type="ECO:0000250" key="1">
    <source>
        <dbReference type="UniProtKB" id="Q9H147"/>
    </source>
</evidence>
<evidence type="ECO:0000255" key="2"/>
<evidence type="ECO:0000256" key="3">
    <source>
        <dbReference type="SAM" id="MobiDB-lite"/>
    </source>
</evidence>
<evidence type="ECO:0000269" key="4">
    <source>
    </source>
</evidence>
<evidence type="ECO:0000305" key="5"/>
<evidence type="ECO:0000312" key="6">
    <source>
        <dbReference type="WormBase" id="T23G5.6"/>
    </source>
</evidence>
<accession>Q03615</accession>
<proteinExistence type="evidence at protein level"/>
<keyword id="KW-0238">DNA-binding</keyword>
<keyword id="KW-0539">Nucleus</keyword>
<keyword id="KW-1185">Reference proteome</keyword>
<dbReference type="EMBL" id="Z19158">
    <property type="protein sequence ID" value="CAA79572.2"/>
    <property type="molecule type" value="Genomic_DNA"/>
</dbReference>
<dbReference type="PIR" id="S28307">
    <property type="entry name" value="S28307"/>
</dbReference>
<dbReference type="RefSeq" id="NP_499042.2">
    <property type="nucleotide sequence ID" value="NM_066641.7"/>
</dbReference>
<dbReference type="SMR" id="Q03615"/>
<dbReference type="BioGRID" id="41502">
    <property type="interactions" value="4"/>
</dbReference>
<dbReference type="FunCoup" id="Q03615">
    <property type="interactions" value="1975"/>
</dbReference>
<dbReference type="STRING" id="6239.T23G5.6.1"/>
<dbReference type="PaxDb" id="6239-T23G5.6"/>
<dbReference type="PeptideAtlas" id="Q03615"/>
<dbReference type="EnsemblMetazoa" id="T23G5.6.1">
    <property type="protein sequence ID" value="T23G5.6.1"/>
    <property type="gene ID" value="WBGene00011964"/>
</dbReference>
<dbReference type="GeneID" id="176303"/>
<dbReference type="KEGG" id="cel:CELE_T23G5.6"/>
<dbReference type="UCSC" id="T23G5.6">
    <property type="organism name" value="c. elegans"/>
</dbReference>
<dbReference type="AGR" id="WB:WBGene00011964"/>
<dbReference type="CTD" id="176303"/>
<dbReference type="WormBase" id="T23G5.6">
    <property type="protein sequence ID" value="CE37794"/>
    <property type="gene ID" value="WBGene00011964"/>
    <property type="gene designation" value="saeg-2"/>
</dbReference>
<dbReference type="eggNOG" id="KOG4801">
    <property type="taxonomic scope" value="Eukaryota"/>
</dbReference>
<dbReference type="GeneTree" id="ENSGT00510000047836"/>
<dbReference type="HOGENOM" id="CLU_912863_0_0_1"/>
<dbReference type="InParanoid" id="Q03615"/>
<dbReference type="OMA" id="NKMNMRI"/>
<dbReference type="OrthoDB" id="5860246at2759"/>
<dbReference type="PhylomeDB" id="Q03615"/>
<dbReference type="PRO" id="PR:Q03615"/>
<dbReference type="Proteomes" id="UP000001940">
    <property type="component" value="Chromosome III"/>
</dbReference>
<dbReference type="Bgee" id="WBGene00011964">
    <property type="expression patterns" value="Expressed in pharyngeal muscle cell (C elegans) and 4 other cell types or tissues"/>
</dbReference>
<dbReference type="GO" id="GO:0005634">
    <property type="term" value="C:nucleus"/>
    <property type="evidence" value="ECO:0000314"/>
    <property type="project" value="WormBase"/>
</dbReference>
<dbReference type="GO" id="GO:0003677">
    <property type="term" value="F:DNA binding"/>
    <property type="evidence" value="ECO:0000318"/>
    <property type="project" value="GO_Central"/>
</dbReference>
<dbReference type="GO" id="GO:0031491">
    <property type="term" value="F:nucleosome binding"/>
    <property type="evidence" value="ECO:0000318"/>
    <property type="project" value="GO_Central"/>
</dbReference>
<dbReference type="InterPro" id="IPR041384">
    <property type="entry name" value="DNTTIP1_dimer"/>
</dbReference>
<dbReference type="InterPro" id="IPR026064">
    <property type="entry name" value="TdIF1"/>
</dbReference>
<dbReference type="InterPro" id="IPR049121">
    <property type="entry name" value="TdIF1_C"/>
</dbReference>
<dbReference type="PANTHER" id="PTHR23399">
    <property type="entry name" value="DEOXYNUCLEOTIDYLTRANSFERASE TERMINAL-INTERACTING PROTEIN 1"/>
    <property type="match status" value="1"/>
</dbReference>
<dbReference type="PANTHER" id="PTHR23399:SF2">
    <property type="entry name" value="DEOXYNUCLEOTIDYLTRANSFERASE TERMINAL-INTERACTING PROTEIN 1"/>
    <property type="match status" value="1"/>
</dbReference>
<dbReference type="Pfam" id="PF18192">
    <property type="entry name" value="DNTTIP1_dimer"/>
    <property type="match status" value="1"/>
</dbReference>
<dbReference type="Pfam" id="PF21229">
    <property type="entry name" value="TdIF1_2nd"/>
    <property type="match status" value="1"/>
</dbReference>
<sequence length="305" mass="35116">MRIVILDELLSREMDGSNDGSSARVNSLKHVIKRNKMDMADDAPSSLDLMRRIFQAEISREIHQIMERHTRTTLLPAIENLRKNGHVVDESVLNGLYCNILEAAKKPYQKDPEPMPPICTNGNGFLDINSQEHENNLKRGYESDSSDVSGVSHCSDAKRRRGRPRKDEEAYRLEMTPPTMNEVIRWNPDRIDVNTRFITATKIAQVMGMPPSILFNKYPRMFRYSCDEDDKNILHEQNLLIRAPGRCYLLVAEDARQLVPSTYFQDVLNVSFLISEPLLSKIRQKAASTYEKYKVFLPTQPNNYL</sequence>
<reference key="1">
    <citation type="journal article" date="1994" name="Nature">
        <title>2.2 Mb of contiguous nucleotide sequence from chromosome III of C. elegans.</title>
        <authorList>
            <person name="Wilson R."/>
            <person name="Ainscough R."/>
            <person name="Anderson K."/>
            <person name="Baynes C."/>
            <person name="Berks M."/>
            <person name="Bonfield J."/>
            <person name="Burton J."/>
            <person name="Connell M."/>
            <person name="Copsey T."/>
            <person name="Cooper J."/>
            <person name="Coulson A."/>
            <person name="Craxton M."/>
            <person name="Dear S."/>
            <person name="Du Z."/>
            <person name="Durbin R."/>
            <person name="Favello A."/>
            <person name="Fraser A."/>
            <person name="Fulton L."/>
            <person name="Gardner A."/>
            <person name="Green P."/>
            <person name="Hawkins T."/>
            <person name="Hillier L."/>
            <person name="Jier M."/>
            <person name="Johnston L."/>
            <person name="Jones M."/>
            <person name="Kershaw J."/>
            <person name="Kirsten J."/>
            <person name="Laisster N."/>
            <person name="Latreille P."/>
            <person name="Lightning J."/>
            <person name="Lloyd C."/>
            <person name="Mortimore B."/>
            <person name="O'Callaghan M."/>
            <person name="Parsons J."/>
            <person name="Percy C."/>
            <person name="Rifken L."/>
            <person name="Roopra A."/>
            <person name="Saunders D."/>
            <person name="Shownkeen R."/>
            <person name="Sims M."/>
            <person name="Smaldon N."/>
            <person name="Smith A."/>
            <person name="Smith M."/>
            <person name="Sonnhammer E."/>
            <person name="Staden R."/>
            <person name="Sulston J."/>
            <person name="Thierry-Mieg J."/>
            <person name="Thomas K."/>
            <person name="Vaudin M."/>
            <person name="Vaughan K."/>
            <person name="Waterston R."/>
            <person name="Watson A."/>
            <person name="Weinstock L."/>
            <person name="Wilkinson-Sproat J."/>
            <person name="Wohldman P."/>
        </authorList>
    </citation>
    <scope>NUCLEOTIDE SEQUENCE [LARGE SCALE GENOMIC DNA]</scope>
    <source>
        <strain>Bristol N2</strain>
    </source>
</reference>
<reference key="2">
    <citation type="journal article" date="1998" name="Science">
        <title>Genome sequence of the nematode C. elegans: a platform for investigating biology.</title>
        <authorList>
            <consortium name="The C. elegans sequencing consortium"/>
        </authorList>
    </citation>
    <scope>NUCLEOTIDE SEQUENCE [LARGE SCALE GENOMIC DNA]</scope>
    <source>
        <strain>Bristol N2</strain>
    </source>
</reference>
<reference key="3">
    <citation type="journal article" date="2011" name="PLoS Genet.">
        <title>Nuclear cGMP-dependent kinase regulates gene expression via activity-dependent recruitment of a conserved histone deacetylase complex.</title>
        <authorList>
            <person name="Hao Y."/>
            <person name="Xu N."/>
            <person name="Box A.C."/>
            <person name="Schaefer L."/>
            <person name="Kannan K."/>
            <person name="Zhang Y."/>
            <person name="Florens L."/>
            <person name="Seidel C."/>
            <person name="Washburn M.P."/>
            <person name="Wiegraebe W."/>
            <person name="Mak H.Y."/>
        </authorList>
    </citation>
    <scope>FUNCTION</scope>
    <scope>IDENTIFICATION IN HISTONE DEACETYLASE COMPLEX</scope>
    <scope>INTERACTION WITH ITSELF AND EGL-4</scope>
    <scope>SUBCELLULAR LOCATION</scope>
    <scope>TISSUE SPECIFICITY</scope>
</reference>
<comment type="function">
    <text evidence="1 4">As a likely component of a histone deacetylase complex, together with saeg-1 and hda-2, functions downstream of the cAMP-dependent kinase egl-4 to regulate the expression of genes required for egg-laying and foraging (PubMed:21573134).</text>
</comment>
<comment type="subunit">
    <text evidence="4">Interacts with phosphorylated egl-4. May interact with itself. May be a component of a histone deacetylase complex containing saeg-2, saeg-1 and hda-2.</text>
</comment>
<comment type="subcellular location">
    <subcellularLocation>
        <location evidence="4">Nucleus</location>
    </subcellularLocation>
</comment>
<comment type="tissue specificity">
    <text evidence="4">Ubiquitously expressed.</text>
</comment>